<comment type="function">
    <text evidence="1">Removes the formyl group from the N-terminal Met of newly synthesized proteins. Requires at least a dipeptide for an efficient rate of reaction. N-terminal L-methionine is a prerequisite for activity but the enzyme has broad specificity at other positions.</text>
</comment>
<comment type="catalytic activity">
    <reaction evidence="1">
        <text>N-terminal N-formyl-L-methionyl-[peptide] + H2O = N-terminal L-methionyl-[peptide] + formate</text>
        <dbReference type="Rhea" id="RHEA:24420"/>
        <dbReference type="Rhea" id="RHEA-COMP:10639"/>
        <dbReference type="Rhea" id="RHEA-COMP:10640"/>
        <dbReference type="ChEBI" id="CHEBI:15377"/>
        <dbReference type="ChEBI" id="CHEBI:15740"/>
        <dbReference type="ChEBI" id="CHEBI:49298"/>
        <dbReference type="ChEBI" id="CHEBI:64731"/>
        <dbReference type="EC" id="3.5.1.88"/>
    </reaction>
</comment>
<comment type="cofactor">
    <cofactor evidence="1">
        <name>Fe(2+)</name>
        <dbReference type="ChEBI" id="CHEBI:29033"/>
    </cofactor>
    <text evidence="1">Binds 1 Fe(2+) ion.</text>
</comment>
<comment type="similarity">
    <text evidence="1">Belongs to the polypeptide deformylase family.</text>
</comment>
<proteinExistence type="inferred from homology"/>
<keyword id="KW-0378">Hydrolase</keyword>
<keyword id="KW-0408">Iron</keyword>
<keyword id="KW-0479">Metal-binding</keyword>
<keyword id="KW-0648">Protein biosynthesis</keyword>
<sequence>MILPINTYSDPVLTAKAKPLKGVDSSIRELIADMFDSMYKAPGIGLAAPQVGHSLRLLVVDISTIKEYADYKPMVVINPRIVSVAGRNAMEEGCLSVPGVAGDVVRPSKITLHYRDEKFEEHTEEFSDMMARVLQHEIDHLDGTLFVDRMEKRDRRKVQKTLDAIKQGRVKTSYPIAPHAPKIAVEA</sequence>
<name>DEF_CHLP8</name>
<dbReference type="EC" id="3.5.1.88" evidence="1"/>
<dbReference type="EMBL" id="CP001099">
    <property type="protein sequence ID" value="ACF11948.1"/>
    <property type="molecule type" value="Genomic_DNA"/>
</dbReference>
<dbReference type="RefSeq" id="WP_012502781.1">
    <property type="nucleotide sequence ID" value="NC_011027.1"/>
</dbReference>
<dbReference type="SMR" id="B3QPU5"/>
<dbReference type="STRING" id="517417.Cpar_1550"/>
<dbReference type="KEGG" id="cpc:Cpar_1550"/>
<dbReference type="eggNOG" id="COG0242">
    <property type="taxonomic scope" value="Bacteria"/>
</dbReference>
<dbReference type="HOGENOM" id="CLU_061901_2_0_10"/>
<dbReference type="OrthoDB" id="9784988at2"/>
<dbReference type="Proteomes" id="UP000008811">
    <property type="component" value="Chromosome"/>
</dbReference>
<dbReference type="GO" id="GO:0046872">
    <property type="term" value="F:metal ion binding"/>
    <property type="evidence" value="ECO:0007669"/>
    <property type="project" value="UniProtKB-KW"/>
</dbReference>
<dbReference type="GO" id="GO:0042586">
    <property type="term" value="F:peptide deformylase activity"/>
    <property type="evidence" value="ECO:0007669"/>
    <property type="project" value="UniProtKB-UniRule"/>
</dbReference>
<dbReference type="GO" id="GO:0043686">
    <property type="term" value="P:co-translational protein modification"/>
    <property type="evidence" value="ECO:0007669"/>
    <property type="project" value="TreeGrafter"/>
</dbReference>
<dbReference type="GO" id="GO:0006412">
    <property type="term" value="P:translation"/>
    <property type="evidence" value="ECO:0007669"/>
    <property type="project" value="UniProtKB-UniRule"/>
</dbReference>
<dbReference type="CDD" id="cd00487">
    <property type="entry name" value="Pep_deformylase"/>
    <property type="match status" value="1"/>
</dbReference>
<dbReference type="Gene3D" id="3.90.45.10">
    <property type="entry name" value="Peptide deformylase"/>
    <property type="match status" value="1"/>
</dbReference>
<dbReference type="HAMAP" id="MF_00163">
    <property type="entry name" value="Pep_deformylase"/>
    <property type="match status" value="1"/>
</dbReference>
<dbReference type="InterPro" id="IPR023635">
    <property type="entry name" value="Peptide_deformylase"/>
</dbReference>
<dbReference type="InterPro" id="IPR036821">
    <property type="entry name" value="Peptide_deformylase_sf"/>
</dbReference>
<dbReference type="NCBIfam" id="TIGR00079">
    <property type="entry name" value="pept_deformyl"/>
    <property type="match status" value="1"/>
</dbReference>
<dbReference type="NCBIfam" id="NF001159">
    <property type="entry name" value="PRK00150.1-3"/>
    <property type="match status" value="1"/>
</dbReference>
<dbReference type="PANTHER" id="PTHR10458">
    <property type="entry name" value="PEPTIDE DEFORMYLASE"/>
    <property type="match status" value="1"/>
</dbReference>
<dbReference type="PANTHER" id="PTHR10458:SF22">
    <property type="entry name" value="PEPTIDE DEFORMYLASE"/>
    <property type="match status" value="1"/>
</dbReference>
<dbReference type="Pfam" id="PF01327">
    <property type="entry name" value="Pep_deformylase"/>
    <property type="match status" value="1"/>
</dbReference>
<dbReference type="PIRSF" id="PIRSF004749">
    <property type="entry name" value="Pep_def"/>
    <property type="match status" value="1"/>
</dbReference>
<dbReference type="PRINTS" id="PR01576">
    <property type="entry name" value="PDEFORMYLASE"/>
</dbReference>
<dbReference type="SUPFAM" id="SSF56420">
    <property type="entry name" value="Peptide deformylase"/>
    <property type="match status" value="1"/>
</dbReference>
<gene>
    <name evidence="1" type="primary">def</name>
    <name type="ordered locus">Cpar_1550</name>
</gene>
<organism>
    <name type="scientific">Chlorobaculum parvum (strain DSM 263 / NCIMB 8327)</name>
    <name type="common">Chlorobium vibrioforme subsp. thiosulfatophilum</name>
    <dbReference type="NCBI Taxonomy" id="517417"/>
    <lineage>
        <taxon>Bacteria</taxon>
        <taxon>Pseudomonadati</taxon>
        <taxon>Chlorobiota</taxon>
        <taxon>Chlorobiia</taxon>
        <taxon>Chlorobiales</taxon>
        <taxon>Chlorobiaceae</taxon>
        <taxon>Chlorobaculum</taxon>
    </lineage>
</organism>
<protein>
    <recommendedName>
        <fullName evidence="1">Peptide deformylase</fullName>
        <shortName evidence="1">PDF</shortName>
        <ecNumber evidence="1">3.5.1.88</ecNumber>
    </recommendedName>
    <alternativeName>
        <fullName evidence="1">Polypeptide deformylase</fullName>
    </alternativeName>
</protein>
<feature type="chain" id="PRO_1000097298" description="Peptide deformylase">
    <location>
        <begin position="1"/>
        <end position="187"/>
    </location>
</feature>
<feature type="active site" evidence="1">
    <location>
        <position position="137"/>
    </location>
</feature>
<feature type="binding site" evidence="1">
    <location>
        <position position="94"/>
    </location>
    <ligand>
        <name>Fe cation</name>
        <dbReference type="ChEBI" id="CHEBI:24875"/>
    </ligand>
</feature>
<feature type="binding site" evidence="1">
    <location>
        <position position="136"/>
    </location>
    <ligand>
        <name>Fe cation</name>
        <dbReference type="ChEBI" id="CHEBI:24875"/>
    </ligand>
</feature>
<feature type="binding site" evidence="1">
    <location>
        <position position="140"/>
    </location>
    <ligand>
        <name>Fe cation</name>
        <dbReference type="ChEBI" id="CHEBI:24875"/>
    </ligand>
</feature>
<reference key="1">
    <citation type="submission" date="2008-06" db="EMBL/GenBank/DDBJ databases">
        <title>Complete sequence of Chlorobaculum parvum NCIB 8327.</title>
        <authorList>
            <consortium name="US DOE Joint Genome Institute"/>
            <person name="Lucas S."/>
            <person name="Copeland A."/>
            <person name="Lapidus A."/>
            <person name="Glavina del Rio T."/>
            <person name="Dalin E."/>
            <person name="Tice H."/>
            <person name="Bruce D."/>
            <person name="Goodwin L."/>
            <person name="Pitluck S."/>
            <person name="Schmutz J."/>
            <person name="Larimer F."/>
            <person name="Land M."/>
            <person name="Hauser L."/>
            <person name="Kyrpides N."/>
            <person name="Mikhailova N."/>
            <person name="Zhao F."/>
            <person name="Li T."/>
            <person name="Liu Z."/>
            <person name="Overmann J."/>
            <person name="Bryant D.A."/>
            <person name="Richardson P."/>
        </authorList>
    </citation>
    <scope>NUCLEOTIDE SEQUENCE [LARGE SCALE GENOMIC DNA]</scope>
    <source>
        <strain>DSM 263 / NCIMB 8327</strain>
    </source>
</reference>
<accession>B3QPU5</accession>
<evidence type="ECO:0000255" key="1">
    <source>
        <dbReference type="HAMAP-Rule" id="MF_00163"/>
    </source>
</evidence>